<organism>
    <name type="scientific">Arabidopsis thaliana</name>
    <name type="common">Mouse-ear cress</name>
    <dbReference type="NCBI Taxonomy" id="3702"/>
    <lineage>
        <taxon>Eukaryota</taxon>
        <taxon>Viridiplantae</taxon>
        <taxon>Streptophyta</taxon>
        <taxon>Embryophyta</taxon>
        <taxon>Tracheophyta</taxon>
        <taxon>Spermatophyta</taxon>
        <taxon>Magnoliopsida</taxon>
        <taxon>eudicotyledons</taxon>
        <taxon>Gunneridae</taxon>
        <taxon>Pentapetalae</taxon>
        <taxon>rosids</taxon>
        <taxon>malvids</taxon>
        <taxon>Brassicales</taxon>
        <taxon>Brassicaceae</taxon>
        <taxon>Camelineae</taxon>
        <taxon>Arabidopsis</taxon>
    </lineage>
</organism>
<feature type="chain" id="PRO_0000436981" description="Probable transcription factor At2g20613">
    <location>
        <begin position="1"/>
        <end position="135"/>
    </location>
</feature>
<feature type="region of interest" description="Disordered" evidence="1">
    <location>
        <begin position="1"/>
        <end position="104"/>
    </location>
</feature>
<feature type="compositionally biased region" description="Acidic residues" evidence="1">
    <location>
        <begin position="28"/>
        <end position="41"/>
    </location>
</feature>
<feature type="compositionally biased region" description="Basic and acidic residues" evidence="1">
    <location>
        <begin position="62"/>
        <end position="80"/>
    </location>
</feature>
<proteinExistence type="inferred from homology"/>
<name>STKLG_ARATH</name>
<protein>
    <recommendedName>
        <fullName evidence="2">Probable transcription factor At2g20613</fullName>
    </recommendedName>
    <alternativeName>
        <fullName evidence="2">Storekeeper-like protein At2g20613</fullName>
    </alternativeName>
</protein>
<dbReference type="EMBL" id="AC007048">
    <property type="protein sequence ID" value="AAM15367.1"/>
    <property type="molecule type" value="Genomic_DNA"/>
</dbReference>
<dbReference type="EMBL" id="CP002685">
    <property type="protein sequence ID" value="AEC07043.1"/>
    <property type="molecule type" value="Genomic_DNA"/>
</dbReference>
<dbReference type="RefSeq" id="NP_179651.1">
    <property type="nucleotide sequence ID" value="NM_127623.1"/>
</dbReference>
<dbReference type="STRING" id="3702.Q8S8D6"/>
<dbReference type="PaxDb" id="3702-AT2G20613.1"/>
<dbReference type="EnsemblPlants" id="AT2G20613.1">
    <property type="protein sequence ID" value="AT2G20613.1"/>
    <property type="gene ID" value="AT2G20613"/>
</dbReference>
<dbReference type="GeneID" id="816586"/>
<dbReference type="Gramene" id="AT2G20613.1">
    <property type="protein sequence ID" value="AT2G20613.1"/>
    <property type="gene ID" value="AT2G20613"/>
</dbReference>
<dbReference type="KEGG" id="ath:AT2G20613"/>
<dbReference type="Araport" id="AT2G20613"/>
<dbReference type="TAIR" id="AT2G20613"/>
<dbReference type="HOGENOM" id="CLU_1888615_0_0_1"/>
<dbReference type="InParanoid" id="Q8S8D6"/>
<dbReference type="PRO" id="PR:Q8S8D6"/>
<dbReference type="Proteomes" id="UP000006548">
    <property type="component" value="Chromosome 2"/>
</dbReference>
<keyword id="KW-1185">Reference proteome</keyword>
<keyword id="KW-0804">Transcription</keyword>
<keyword id="KW-0805">Transcription regulation</keyword>
<comment type="similarity">
    <text evidence="2">Belongs to the GeBP family.</text>
</comment>
<comment type="online information" name="Plant Transcription Factor Database">
    <link uri="https://planttfdb.gao-lab.org/family.php?fam=GeBP#family_intro"/>
</comment>
<evidence type="ECO:0000256" key="1">
    <source>
        <dbReference type="SAM" id="MobiDB-lite"/>
    </source>
</evidence>
<evidence type="ECO:0000305" key="2"/>
<evidence type="ECO:0000312" key="3">
    <source>
        <dbReference type="Araport" id="AT2G20613"/>
    </source>
</evidence>
<sequence>MSHKRFNPLTASSSDEDELETPIREVEDSSSDEETDSDSDSELGKKDEVVTEVSALNNQESKSVKISEKSVAKRSRETHEAQASADVKKAKKVKKRGGGGGEEAETKKAYFQRVWTDDDEIVVLEGFIDYKNDSG</sequence>
<reference key="1">
    <citation type="journal article" date="1999" name="Nature">
        <title>Sequence and analysis of chromosome 2 of the plant Arabidopsis thaliana.</title>
        <authorList>
            <person name="Lin X."/>
            <person name="Kaul S."/>
            <person name="Rounsley S.D."/>
            <person name="Shea T.P."/>
            <person name="Benito M.-I."/>
            <person name="Town C.D."/>
            <person name="Fujii C.Y."/>
            <person name="Mason T.M."/>
            <person name="Bowman C.L."/>
            <person name="Barnstead M.E."/>
            <person name="Feldblyum T.V."/>
            <person name="Buell C.R."/>
            <person name="Ketchum K.A."/>
            <person name="Lee J.J."/>
            <person name="Ronning C.M."/>
            <person name="Koo H.L."/>
            <person name="Moffat K.S."/>
            <person name="Cronin L.A."/>
            <person name="Shen M."/>
            <person name="Pai G."/>
            <person name="Van Aken S."/>
            <person name="Umayam L."/>
            <person name="Tallon L.J."/>
            <person name="Gill J.E."/>
            <person name="Adams M.D."/>
            <person name="Carrera A.J."/>
            <person name="Creasy T.H."/>
            <person name="Goodman H.M."/>
            <person name="Somerville C.R."/>
            <person name="Copenhaver G.P."/>
            <person name="Preuss D."/>
            <person name="Nierman W.C."/>
            <person name="White O."/>
            <person name="Eisen J.A."/>
            <person name="Salzberg S.L."/>
            <person name="Fraser C.M."/>
            <person name="Venter J.C."/>
        </authorList>
    </citation>
    <scope>NUCLEOTIDE SEQUENCE [LARGE SCALE GENOMIC DNA]</scope>
    <source>
        <strain>cv. Columbia</strain>
    </source>
</reference>
<reference key="2">
    <citation type="journal article" date="2017" name="Plant J.">
        <title>Araport11: a complete reannotation of the Arabidopsis thaliana reference genome.</title>
        <authorList>
            <person name="Cheng C.Y."/>
            <person name="Krishnakumar V."/>
            <person name="Chan A.P."/>
            <person name="Thibaud-Nissen F."/>
            <person name="Schobel S."/>
            <person name="Town C.D."/>
        </authorList>
    </citation>
    <scope>GENOME REANNOTATION</scope>
    <source>
        <strain>cv. Columbia</strain>
    </source>
</reference>
<gene>
    <name evidence="3" type="ordered locus">At2g20613</name>
</gene>
<accession>Q8S8D6</accession>